<name>Y1264_MYCTO</name>
<reference key="1">
    <citation type="journal article" date="2002" name="J. Bacteriol.">
        <title>Whole-genome comparison of Mycobacterium tuberculosis clinical and laboratory strains.</title>
        <authorList>
            <person name="Fleischmann R.D."/>
            <person name="Alland D."/>
            <person name="Eisen J.A."/>
            <person name="Carpenter L."/>
            <person name="White O."/>
            <person name="Peterson J.D."/>
            <person name="DeBoy R.T."/>
            <person name="Dodson R.J."/>
            <person name="Gwinn M.L."/>
            <person name="Haft D.H."/>
            <person name="Hickey E.K."/>
            <person name="Kolonay J.F."/>
            <person name="Nelson W.C."/>
            <person name="Umayam L.A."/>
            <person name="Ermolaeva M.D."/>
            <person name="Salzberg S.L."/>
            <person name="Delcher A."/>
            <person name="Utterback T.R."/>
            <person name="Weidman J.F."/>
            <person name="Khouri H.M."/>
            <person name="Gill J."/>
            <person name="Mikula A."/>
            <person name="Bishai W."/>
            <person name="Jacobs W.R. Jr."/>
            <person name="Venter J.C."/>
            <person name="Fraser C.M."/>
        </authorList>
    </citation>
    <scope>NUCLEOTIDE SEQUENCE [LARGE SCALE GENOMIC DNA]</scope>
    <source>
        <strain>CDC 1551 / Oshkosh</strain>
    </source>
</reference>
<proteinExistence type="inferred from homology"/>
<evidence type="ECO:0000250" key="1"/>
<evidence type="ECO:0000250" key="2">
    <source>
        <dbReference type="UniProtKB" id="P9WMU9"/>
    </source>
</evidence>
<evidence type="ECO:0000255" key="3">
    <source>
        <dbReference type="PROSITE-ProRule" id="PRU00099"/>
    </source>
</evidence>
<sequence>MTDHVREADDANIDDLLGDLGGTARAERAKLVEWLLEQGITPDEIRATNPPLLLATRHLVGDDGTYVSAREISENYGVDLELLQRVQRAVGLARVDDPDAVVHMRADGEAAARAQRFVELGLNPDQVVLVVRVLAEGLSHAAEAMRYTALEAIMRPGATELDIAKGSQALVSQIVPLLGPMIQDMLFMQLRHMMETEAVNAGERAAGKPLPGARQVTVAFADLVGFTQLGEVVSAEELGHLAGRLAGLARDLTAPPVWFIKTIGDAVMLVCPDPAPLLDTVLKLVEVVDTDNNFPRLRAGVASGMAVSRAGDWFGSPVNVASRVTGVARPGAVLVADSVREALGDAPEADGFQWSFAGPRRLRGIRGDVRLFRVRRGATRTGSGGAAQDDDLAGSSP</sequence>
<protein>
    <recommendedName>
        <fullName>pH-sensitive adenylate cyclase MT1302</fullName>
        <ecNumber>4.6.1.1</ecNumber>
    </recommendedName>
    <alternativeName>
        <fullName>ATP pyrophosphate-lyase</fullName>
    </alternativeName>
    <alternativeName>
        <fullName>Adenylyl cyclase</fullName>
    </alternativeName>
</protein>
<organism>
    <name type="scientific">Mycobacterium tuberculosis (strain CDC 1551 / Oshkosh)</name>
    <dbReference type="NCBI Taxonomy" id="83331"/>
    <lineage>
        <taxon>Bacteria</taxon>
        <taxon>Bacillati</taxon>
        <taxon>Actinomycetota</taxon>
        <taxon>Actinomycetes</taxon>
        <taxon>Mycobacteriales</taxon>
        <taxon>Mycobacteriaceae</taxon>
        <taxon>Mycobacterium</taxon>
        <taxon>Mycobacterium tuberculosis complex</taxon>
    </lineage>
</organism>
<comment type="function">
    <text evidence="1">Catalyzes the formation of the second messenger cAMP.</text>
</comment>
<comment type="catalytic activity">
    <reaction>
        <text>ATP = 3',5'-cyclic AMP + diphosphate</text>
        <dbReference type="Rhea" id="RHEA:15389"/>
        <dbReference type="ChEBI" id="CHEBI:30616"/>
        <dbReference type="ChEBI" id="CHEBI:33019"/>
        <dbReference type="ChEBI" id="CHEBI:58165"/>
        <dbReference type="EC" id="4.6.1.1"/>
    </reaction>
</comment>
<comment type="cofactor">
    <cofactor evidence="1">
        <name>Mn(2+)</name>
        <dbReference type="ChEBI" id="CHEBI:29035"/>
    </cofactor>
    <cofactor evidence="1">
        <name>Mg(2+)</name>
        <dbReference type="ChEBI" id="CHEBI:18420"/>
    </cofactor>
    <text evidence="1">The isolated catalytic domain prefers Mn(2+) over Mg(2+) as a cofactor.</text>
</comment>
<comment type="subunit">
    <text evidence="1">Homodimer.</text>
</comment>
<comment type="similarity">
    <text evidence="3">Belongs to the adenylyl cyclase class-4/guanylyl cyclase family.</text>
</comment>
<accession>P9WMU8</accession>
<accession>L0T7S0</accession>
<accession>Q11055</accession>
<keyword id="KW-0067">ATP-binding</keyword>
<keyword id="KW-0115">cAMP biosynthesis</keyword>
<keyword id="KW-0446">Lipid-binding</keyword>
<keyword id="KW-0456">Lyase</keyword>
<keyword id="KW-0460">Magnesium</keyword>
<keyword id="KW-0464">Manganese</keyword>
<keyword id="KW-0479">Metal-binding</keyword>
<keyword id="KW-0547">Nucleotide-binding</keyword>
<keyword id="KW-1185">Reference proteome</keyword>
<gene>
    <name type="ordered locus">MT1302</name>
</gene>
<feature type="chain" id="PRO_0000427239" description="pH-sensitive adenylate cyclase MT1302">
    <location>
        <begin position="1"/>
        <end position="397"/>
    </location>
</feature>
<feature type="domain" description="Guanylate cyclase" evidence="3">
    <location>
        <begin position="217"/>
        <end position="325"/>
    </location>
</feature>
<feature type="region of interest" description="Regulatory domain" evidence="1">
    <location>
        <begin position="1"/>
        <end position="191"/>
    </location>
</feature>
<feature type="region of interest" description="Linker" evidence="1">
    <location>
        <begin position="192"/>
        <end position="206"/>
    </location>
</feature>
<feature type="region of interest" description="Catalytic domain" evidence="1">
    <location>
        <begin position="211"/>
        <end position="397"/>
    </location>
</feature>
<feature type="binding site" evidence="2">
    <location>
        <position position="222"/>
    </location>
    <ligand>
        <name>Mn(2+)</name>
        <dbReference type="ChEBI" id="CHEBI:29035"/>
    </ligand>
</feature>
<feature type="binding site" evidence="1">
    <location>
        <position position="261"/>
    </location>
    <ligand>
        <name>substrate</name>
    </ligand>
</feature>
<feature type="binding site" evidence="2">
    <location>
        <position position="265"/>
    </location>
    <ligand>
        <name>Mn(2+)</name>
        <dbReference type="ChEBI" id="CHEBI:29035"/>
    </ligand>
</feature>
<feature type="binding site" evidence="1">
    <location>
        <position position="298"/>
    </location>
    <ligand>
        <name>ATP</name>
        <dbReference type="ChEBI" id="CHEBI:30616"/>
    </ligand>
</feature>
<feature type="binding site" evidence="1">
    <location>
        <position position="312"/>
    </location>
    <ligand>
        <name>substrate</name>
    </ligand>
</feature>
<dbReference type="EC" id="4.6.1.1"/>
<dbReference type="EMBL" id="AE000516">
    <property type="protein sequence ID" value="AAK45561.1"/>
    <property type="molecule type" value="Genomic_DNA"/>
</dbReference>
<dbReference type="PIR" id="H70753">
    <property type="entry name" value="H70753"/>
</dbReference>
<dbReference type="RefSeq" id="WP_003406372.1">
    <property type="nucleotide sequence ID" value="NZ_KK341227.1"/>
</dbReference>
<dbReference type="SMR" id="P9WMU8"/>
<dbReference type="KEGG" id="mtc:MT1302"/>
<dbReference type="PATRIC" id="fig|83331.31.peg.1406"/>
<dbReference type="HOGENOM" id="CLU_043761_2_0_11"/>
<dbReference type="Proteomes" id="UP000001020">
    <property type="component" value="Chromosome"/>
</dbReference>
<dbReference type="GO" id="GO:0004016">
    <property type="term" value="F:adenylate cyclase activity"/>
    <property type="evidence" value="ECO:0007669"/>
    <property type="project" value="UniProtKB-EC"/>
</dbReference>
<dbReference type="GO" id="GO:0005524">
    <property type="term" value="F:ATP binding"/>
    <property type="evidence" value="ECO:0007669"/>
    <property type="project" value="UniProtKB-KW"/>
</dbReference>
<dbReference type="GO" id="GO:0008289">
    <property type="term" value="F:lipid binding"/>
    <property type="evidence" value="ECO:0007669"/>
    <property type="project" value="UniProtKB-KW"/>
</dbReference>
<dbReference type="GO" id="GO:0046872">
    <property type="term" value="F:metal ion binding"/>
    <property type="evidence" value="ECO:0007669"/>
    <property type="project" value="UniProtKB-KW"/>
</dbReference>
<dbReference type="GO" id="GO:0006171">
    <property type="term" value="P:cAMP biosynthetic process"/>
    <property type="evidence" value="ECO:0007669"/>
    <property type="project" value="UniProtKB-KW"/>
</dbReference>
<dbReference type="GO" id="GO:0035556">
    <property type="term" value="P:intracellular signal transduction"/>
    <property type="evidence" value="ECO:0007669"/>
    <property type="project" value="InterPro"/>
</dbReference>
<dbReference type="CDD" id="cd07556">
    <property type="entry name" value="Nucleotidyl_cyc_III"/>
    <property type="match status" value="1"/>
</dbReference>
<dbReference type="FunFam" id="3.30.70.1230:FF:000076">
    <property type="entry name" value="pH-sensitive adenylate cyclase Rv1264"/>
    <property type="match status" value="1"/>
</dbReference>
<dbReference type="Gene3D" id="3.30.70.1230">
    <property type="entry name" value="Nucleotide cyclase"/>
    <property type="match status" value="1"/>
</dbReference>
<dbReference type="InterPro" id="IPR001054">
    <property type="entry name" value="A/G_cyclase"/>
</dbReference>
<dbReference type="InterPro" id="IPR032026">
    <property type="entry name" value="Ad_Cy_reg"/>
</dbReference>
<dbReference type="InterPro" id="IPR050697">
    <property type="entry name" value="Adenylyl/Guanylyl_Cyclase_3/4"/>
</dbReference>
<dbReference type="InterPro" id="IPR029787">
    <property type="entry name" value="Nucleotide_cyclase"/>
</dbReference>
<dbReference type="PANTHER" id="PTHR43081">
    <property type="entry name" value="ADENYLATE CYCLASE, TERMINAL-DIFFERENTIATION SPECIFIC-RELATED"/>
    <property type="match status" value="1"/>
</dbReference>
<dbReference type="PANTHER" id="PTHR43081:SF19">
    <property type="entry name" value="PH-SENSITIVE ADENYLATE CYCLASE RV1264"/>
    <property type="match status" value="1"/>
</dbReference>
<dbReference type="Pfam" id="PF16701">
    <property type="entry name" value="Ad_Cy_reg"/>
    <property type="match status" value="1"/>
</dbReference>
<dbReference type="Pfam" id="PF00211">
    <property type="entry name" value="Guanylate_cyc"/>
    <property type="match status" value="1"/>
</dbReference>
<dbReference type="SMART" id="SM00044">
    <property type="entry name" value="CYCc"/>
    <property type="match status" value="1"/>
</dbReference>
<dbReference type="SUPFAM" id="SSF55073">
    <property type="entry name" value="Nucleotide cyclase"/>
    <property type="match status" value="1"/>
</dbReference>
<dbReference type="PROSITE" id="PS50125">
    <property type="entry name" value="GUANYLATE_CYCLASE_2"/>
    <property type="match status" value="1"/>
</dbReference>